<evidence type="ECO:0000255" key="1">
    <source>
        <dbReference type="HAMAP-Rule" id="MF_00376"/>
    </source>
</evidence>
<sequence length="201" mass="22617">MTLVIGLTGGIASGKSTVAQMFQQCGITVVDADVIAKEAVEQGMPAYQKIAETFGEGVLLETGDIDRRKLGEIVFANEEKRLQLNAIVHPEVRKMMIKQRDEAIRAGERFVVLDIPLLYESGLEHLTDKVIVVWVPMELQLERLMKRNRLNKDEALNRIHAQQSLDEKKKRADAVIDNSGSLKDTEAQLHQLLDTWSNIEK</sequence>
<organism>
    <name type="scientific">Bacillus licheniformis (strain ATCC 14580 / DSM 13 / JCM 2505 / CCUG 7422 / NBRC 12200 / NCIMB 9375 / NCTC 10341 / NRRL NRS-1264 / Gibson 46)</name>
    <dbReference type="NCBI Taxonomy" id="279010"/>
    <lineage>
        <taxon>Bacteria</taxon>
        <taxon>Bacillati</taxon>
        <taxon>Bacillota</taxon>
        <taxon>Bacilli</taxon>
        <taxon>Bacillales</taxon>
        <taxon>Bacillaceae</taxon>
        <taxon>Bacillus</taxon>
    </lineage>
</organism>
<proteinExistence type="inferred from homology"/>
<reference key="1">
    <citation type="journal article" date="2004" name="J. Mol. Microbiol. Biotechnol.">
        <title>The complete genome sequence of Bacillus licheniformis DSM13, an organism with great industrial potential.</title>
        <authorList>
            <person name="Veith B."/>
            <person name="Herzberg C."/>
            <person name="Steckel S."/>
            <person name="Feesche J."/>
            <person name="Maurer K.H."/>
            <person name="Ehrenreich P."/>
            <person name="Baeumer S."/>
            <person name="Henne A."/>
            <person name="Liesegang H."/>
            <person name="Merkl R."/>
            <person name="Ehrenreich A."/>
            <person name="Gottschalk G."/>
        </authorList>
    </citation>
    <scope>NUCLEOTIDE SEQUENCE [LARGE SCALE GENOMIC DNA]</scope>
    <source>
        <strain>ATCC 14580 / DSM 13 / JCM 2505 / CCUG 7422 / NBRC 12200 / NCIMB 9375 / NCTC 10341 / NRRL NRS-1264 / Gibson 46</strain>
    </source>
</reference>
<reference key="2">
    <citation type="journal article" date="2004" name="Genome Biol.">
        <title>Complete genome sequence of the industrial bacterium Bacillus licheniformis and comparisons with closely related Bacillus species.</title>
        <authorList>
            <person name="Rey M.W."/>
            <person name="Ramaiya P."/>
            <person name="Nelson B.A."/>
            <person name="Brody-Karpin S.D."/>
            <person name="Zaretsky E.J."/>
            <person name="Tang M."/>
            <person name="Lopez de Leon A."/>
            <person name="Xiang H."/>
            <person name="Gusti V."/>
            <person name="Clausen I.G."/>
            <person name="Olsen P.B."/>
            <person name="Rasmussen M.D."/>
            <person name="Andersen J.T."/>
            <person name="Joergensen P.L."/>
            <person name="Larsen T.S."/>
            <person name="Sorokin A."/>
            <person name="Bolotin A."/>
            <person name="Lapidus A."/>
            <person name="Galleron N."/>
            <person name="Ehrlich S.D."/>
            <person name="Berka R.M."/>
        </authorList>
    </citation>
    <scope>NUCLEOTIDE SEQUENCE [LARGE SCALE GENOMIC DNA]</scope>
    <source>
        <strain>ATCC 14580 / DSM 13 / JCM 2505 / CCUG 7422 / NBRC 12200 / NCIMB 9375 / NCTC 10341 / NRRL NRS-1264 / Gibson 46</strain>
    </source>
</reference>
<accession>Q65G95</accession>
<accession>Q62RQ0</accession>
<keyword id="KW-0067">ATP-binding</keyword>
<keyword id="KW-0173">Coenzyme A biosynthesis</keyword>
<keyword id="KW-0963">Cytoplasm</keyword>
<keyword id="KW-0418">Kinase</keyword>
<keyword id="KW-0547">Nucleotide-binding</keyword>
<keyword id="KW-1185">Reference proteome</keyword>
<keyword id="KW-0808">Transferase</keyword>
<name>COAE_BACLD</name>
<feature type="chain" id="PRO_0000243258" description="Dephospho-CoA kinase">
    <location>
        <begin position="1"/>
        <end position="201"/>
    </location>
</feature>
<feature type="domain" description="DPCK" evidence="1">
    <location>
        <begin position="4"/>
        <end position="201"/>
    </location>
</feature>
<feature type="binding site" evidence="1">
    <location>
        <begin position="12"/>
        <end position="17"/>
    </location>
    <ligand>
        <name>ATP</name>
        <dbReference type="ChEBI" id="CHEBI:30616"/>
    </ligand>
</feature>
<comment type="function">
    <text evidence="1">Catalyzes the phosphorylation of the 3'-hydroxyl group of dephosphocoenzyme A to form coenzyme A.</text>
</comment>
<comment type="catalytic activity">
    <reaction evidence="1">
        <text>3'-dephospho-CoA + ATP = ADP + CoA + H(+)</text>
        <dbReference type="Rhea" id="RHEA:18245"/>
        <dbReference type="ChEBI" id="CHEBI:15378"/>
        <dbReference type="ChEBI" id="CHEBI:30616"/>
        <dbReference type="ChEBI" id="CHEBI:57287"/>
        <dbReference type="ChEBI" id="CHEBI:57328"/>
        <dbReference type="ChEBI" id="CHEBI:456216"/>
        <dbReference type="EC" id="2.7.1.24"/>
    </reaction>
</comment>
<comment type="pathway">
    <text evidence="1">Cofactor biosynthesis; coenzyme A biosynthesis; CoA from (R)-pantothenate: step 5/5.</text>
</comment>
<comment type="subcellular location">
    <subcellularLocation>
        <location evidence="1">Cytoplasm</location>
    </subcellularLocation>
</comment>
<comment type="similarity">
    <text evidence="1">Belongs to the CoaE family.</text>
</comment>
<dbReference type="EC" id="2.7.1.24" evidence="1"/>
<dbReference type="EMBL" id="AE017333">
    <property type="protein sequence ID" value="AAU41919.1"/>
    <property type="molecule type" value="Genomic_DNA"/>
</dbReference>
<dbReference type="EMBL" id="CP000002">
    <property type="protein sequence ID" value="AAU24560.1"/>
    <property type="molecule type" value="Genomic_DNA"/>
</dbReference>
<dbReference type="RefSeq" id="WP_003184302.1">
    <property type="nucleotide sequence ID" value="NC_006322.1"/>
</dbReference>
<dbReference type="SMR" id="Q65G95"/>
<dbReference type="STRING" id="279010.BL00391"/>
<dbReference type="GeneID" id="92860353"/>
<dbReference type="KEGG" id="bld:BLi03054"/>
<dbReference type="KEGG" id="bli:BL00391"/>
<dbReference type="eggNOG" id="COG0237">
    <property type="taxonomic scope" value="Bacteria"/>
</dbReference>
<dbReference type="HOGENOM" id="CLU_057180_0_0_9"/>
<dbReference type="UniPathway" id="UPA00241">
    <property type="reaction ID" value="UER00356"/>
</dbReference>
<dbReference type="Proteomes" id="UP000000606">
    <property type="component" value="Chromosome"/>
</dbReference>
<dbReference type="GO" id="GO:0005737">
    <property type="term" value="C:cytoplasm"/>
    <property type="evidence" value="ECO:0007669"/>
    <property type="project" value="UniProtKB-SubCell"/>
</dbReference>
<dbReference type="GO" id="GO:0005524">
    <property type="term" value="F:ATP binding"/>
    <property type="evidence" value="ECO:0007669"/>
    <property type="project" value="UniProtKB-UniRule"/>
</dbReference>
<dbReference type="GO" id="GO:0004140">
    <property type="term" value="F:dephospho-CoA kinase activity"/>
    <property type="evidence" value="ECO:0007669"/>
    <property type="project" value="UniProtKB-UniRule"/>
</dbReference>
<dbReference type="GO" id="GO:0015937">
    <property type="term" value="P:coenzyme A biosynthetic process"/>
    <property type="evidence" value="ECO:0007669"/>
    <property type="project" value="UniProtKB-UniRule"/>
</dbReference>
<dbReference type="CDD" id="cd02022">
    <property type="entry name" value="DPCK"/>
    <property type="match status" value="1"/>
</dbReference>
<dbReference type="FunFam" id="3.40.50.300:FF:000485">
    <property type="entry name" value="Dephospho-CoA kinase CAB5"/>
    <property type="match status" value="1"/>
</dbReference>
<dbReference type="Gene3D" id="3.40.50.300">
    <property type="entry name" value="P-loop containing nucleotide triphosphate hydrolases"/>
    <property type="match status" value="1"/>
</dbReference>
<dbReference type="HAMAP" id="MF_00376">
    <property type="entry name" value="Dephospho_CoA_kinase"/>
    <property type="match status" value="1"/>
</dbReference>
<dbReference type="InterPro" id="IPR001977">
    <property type="entry name" value="Depp_CoAkinase"/>
</dbReference>
<dbReference type="InterPro" id="IPR027417">
    <property type="entry name" value="P-loop_NTPase"/>
</dbReference>
<dbReference type="NCBIfam" id="TIGR00152">
    <property type="entry name" value="dephospho-CoA kinase"/>
    <property type="match status" value="1"/>
</dbReference>
<dbReference type="PANTHER" id="PTHR10695:SF46">
    <property type="entry name" value="BIFUNCTIONAL COENZYME A SYNTHASE-RELATED"/>
    <property type="match status" value="1"/>
</dbReference>
<dbReference type="PANTHER" id="PTHR10695">
    <property type="entry name" value="DEPHOSPHO-COA KINASE-RELATED"/>
    <property type="match status" value="1"/>
</dbReference>
<dbReference type="Pfam" id="PF01121">
    <property type="entry name" value="CoaE"/>
    <property type="match status" value="1"/>
</dbReference>
<dbReference type="SUPFAM" id="SSF52540">
    <property type="entry name" value="P-loop containing nucleoside triphosphate hydrolases"/>
    <property type="match status" value="1"/>
</dbReference>
<dbReference type="PROSITE" id="PS51219">
    <property type="entry name" value="DPCK"/>
    <property type="match status" value="1"/>
</dbReference>
<gene>
    <name evidence="1" type="primary">coaE</name>
    <name type="ordered locus">BLi03054</name>
    <name type="ordered locus">BL00391</name>
</gene>
<protein>
    <recommendedName>
        <fullName evidence="1">Dephospho-CoA kinase</fullName>
        <ecNumber evidence="1">2.7.1.24</ecNumber>
    </recommendedName>
    <alternativeName>
        <fullName evidence="1">Dephosphocoenzyme A kinase</fullName>
    </alternativeName>
</protein>